<keyword id="KW-0240">DNA-directed RNA polymerase</keyword>
<keyword id="KW-0548">Nucleotidyltransferase</keyword>
<keyword id="KW-0804">Transcription</keyword>
<keyword id="KW-0808">Transferase</keyword>
<accession>A4XI30</accession>
<reference key="1">
    <citation type="submission" date="2007-04" db="EMBL/GenBank/DDBJ databases">
        <title>Genome sequence of the thermophilic hydrogen-producing bacterium Caldicellulosiruptor saccharolyticus DSM 8903.</title>
        <authorList>
            <person name="Copeland A."/>
            <person name="Lucas S."/>
            <person name="Lapidus A."/>
            <person name="Barry K."/>
            <person name="Detter J.C."/>
            <person name="Glavina del Rio T."/>
            <person name="Hammon N."/>
            <person name="Israni S."/>
            <person name="Dalin E."/>
            <person name="Tice H."/>
            <person name="Pitluck S."/>
            <person name="Kiss H."/>
            <person name="Brettin T."/>
            <person name="Bruce D."/>
            <person name="Han C."/>
            <person name="Schmutz J."/>
            <person name="Larimer F."/>
            <person name="Land M."/>
            <person name="Hauser L."/>
            <person name="Kyrpides N."/>
            <person name="Lykidis A."/>
            <person name="van de Werken H.J.G."/>
            <person name="Verhaart M.R.A."/>
            <person name="VanFossen A.L."/>
            <person name="Lewis D.L."/>
            <person name="Nichols J.D."/>
            <person name="Goorissen H.P."/>
            <person name="van Niel E.W.J."/>
            <person name="Stams F.J.M."/>
            <person name="Willquist K.U."/>
            <person name="Ward D.E."/>
            <person name="van der Oost J."/>
            <person name="Kelly R.M."/>
            <person name="Kengen S.M.W."/>
            <person name="Richardson P."/>
        </authorList>
    </citation>
    <scope>NUCLEOTIDE SEQUENCE [LARGE SCALE GENOMIC DNA]</scope>
    <source>
        <strain>ATCC 43494 / DSM 8903 / Tp8T 6331</strain>
    </source>
</reference>
<gene>
    <name evidence="1" type="primary">rpoB</name>
    <name type="ordered locus">Csac_0951</name>
</gene>
<sequence length="1229" mass="138333">MALPRPVQYGKVQRMSYGKVKEVLDLPYLLEIQKKSFQWFLDEGLREVLREISPIKDYTENLLLEFVDYYFDGPPKYSEQECKERDATYARPLKVKVRLINKETGEIKEQDIYMGEFPIMTETGTFIINGAERVIVSQLIRSPGCYFASSIDKQGRKIFSGTIIPNRGAWLEFETDTSELLSVRLDRTRKVSLTTLLKAFGLYNQQLIFNKLGEDERLKASLEKEANKGEIGNPVENALLEIYRRLRPGEPPNVENAKNLLERMYFDPRGYDLAKVGRYKLNKKLSLWKRIFNKRAAEDIVDKRTGEILVKEGEIISREAALNIQDAGINEVLVYVEDDKVFKVVGNNTVKLDRYVDFDVSDLNIKELVYLPVLNEILSTTNDVNEIKQLIKERERELVPYCLTRDDVFAATSYFLGLKYGIGHIDDIDHLGNRRVRAVGELLQNQFRIGLARMERVIRERMTIQDIDSVTPQTLINIRPVTAAIKEFFGSSPLSQFMDQVNPLAALTNKRRLSALGPGGLSRDRAGFEVRDVHHSHYGRMCPIETPEGPNIGLITSLATYARVNEYGFLETPYRKVDKKEARVTDEVVYLTADEEDTYKIAQATEPVDEEGRFINQRITVRFGEDIIEVDKHEVDLVDISPKQIVSVSTSLIPFLENDDANRALMGSNMQRQAVPLLTTESPIIGTGVEYRAAVDSGVCVLAKKDGIVEKVSADEIVIQNHDGTKDVYHLLKFKRTNQGTCFNQRPIVRKGQEVKTGEVIADGPSTDHGELALGKNVLVAFMPWEGYNYEDAILISERLVKEDVYTSIHIEEYECEARDTKLGPEEITRDIPNIGEDAIKDLDERGIIRIGAEVKSGDILVGKVTPKGETELTAEERLLRAIFGEKARETRDTSLRVPHGEGGIVVDVKVFSRDKGDELPPGVNQLVRVYVAQKRKISVGDKMAGRHGNKGVISRILPVEDMPFLPDGTPVDIVLNPLGVPSRMNIGQILETHLGYAAKALGWKVATPVFDGAKEEDIEEALNLAGLSPNGKTILYDGRTGEPFDNEVTVGYMYMLKLVHLVDDKIHARSTGPYSLVTQQPLGGKAQFGGQRFGEMEVWALEAYGAAYTLQELLTVKSDDVTGRVKTYEAIVKGENIPEPGIPESFKVLVKELQSLCLDVKLLSEDNKEIELKESIDEDEQPQGLGAFERGLEEVENGEEDDDKEKFYEDLMDASQEQDESADDDIDE</sequence>
<name>RPOB_CALS8</name>
<feature type="chain" id="PRO_1000051967" description="DNA-directed RNA polymerase subunit beta">
    <location>
        <begin position="1"/>
        <end position="1229"/>
    </location>
</feature>
<feature type="region of interest" description="Disordered" evidence="2">
    <location>
        <begin position="1175"/>
        <end position="1229"/>
    </location>
</feature>
<feature type="compositionally biased region" description="Acidic residues" evidence="2">
    <location>
        <begin position="1195"/>
        <end position="1204"/>
    </location>
</feature>
<feature type="compositionally biased region" description="Acidic residues" evidence="2">
    <location>
        <begin position="1211"/>
        <end position="1229"/>
    </location>
</feature>
<evidence type="ECO:0000255" key="1">
    <source>
        <dbReference type="HAMAP-Rule" id="MF_01321"/>
    </source>
</evidence>
<evidence type="ECO:0000256" key="2">
    <source>
        <dbReference type="SAM" id="MobiDB-lite"/>
    </source>
</evidence>
<protein>
    <recommendedName>
        <fullName evidence="1">DNA-directed RNA polymerase subunit beta</fullName>
        <shortName evidence="1">RNAP subunit beta</shortName>
        <ecNumber evidence="1">2.7.7.6</ecNumber>
    </recommendedName>
    <alternativeName>
        <fullName evidence="1">RNA polymerase subunit beta</fullName>
    </alternativeName>
    <alternativeName>
        <fullName evidence="1">Transcriptase subunit beta</fullName>
    </alternativeName>
</protein>
<comment type="function">
    <text evidence="1">DNA-dependent RNA polymerase catalyzes the transcription of DNA into RNA using the four ribonucleoside triphosphates as substrates.</text>
</comment>
<comment type="catalytic activity">
    <reaction evidence="1">
        <text>RNA(n) + a ribonucleoside 5'-triphosphate = RNA(n+1) + diphosphate</text>
        <dbReference type="Rhea" id="RHEA:21248"/>
        <dbReference type="Rhea" id="RHEA-COMP:14527"/>
        <dbReference type="Rhea" id="RHEA-COMP:17342"/>
        <dbReference type="ChEBI" id="CHEBI:33019"/>
        <dbReference type="ChEBI" id="CHEBI:61557"/>
        <dbReference type="ChEBI" id="CHEBI:140395"/>
        <dbReference type="EC" id="2.7.7.6"/>
    </reaction>
</comment>
<comment type="subunit">
    <text evidence="1">The RNAP catalytic core consists of 2 alpha, 1 beta, 1 beta' and 1 omega subunit. When a sigma factor is associated with the core the holoenzyme is formed, which can initiate transcription.</text>
</comment>
<comment type="similarity">
    <text evidence="1">Belongs to the RNA polymerase beta chain family.</text>
</comment>
<organism>
    <name type="scientific">Caldicellulosiruptor saccharolyticus (strain ATCC 43494 / DSM 8903 / Tp8T 6331)</name>
    <dbReference type="NCBI Taxonomy" id="351627"/>
    <lineage>
        <taxon>Bacteria</taxon>
        <taxon>Bacillati</taxon>
        <taxon>Bacillota</taxon>
        <taxon>Bacillota incertae sedis</taxon>
        <taxon>Caldicellulosiruptorales</taxon>
        <taxon>Caldicellulosiruptoraceae</taxon>
        <taxon>Caldicellulosiruptor</taxon>
    </lineage>
</organism>
<proteinExistence type="inferred from homology"/>
<dbReference type="EC" id="2.7.7.6" evidence="1"/>
<dbReference type="EMBL" id="CP000679">
    <property type="protein sequence ID" value="ABP66565.1"/>
    <property type="molecule type" value="Genomic_DNA"/>
</dbReference>
<dbReference type="SMR" id="A4XI30"/>
<dbReference type="STRING" id="351627.Csac_0951"/>
<dbReference type="KEGG" id="csc:Csac_0951"/>
<dbReference type="eggNOG" id="COG0085">
    <property type="taxonomic scope" value="Bacteria"/>
</dbReference>
<dbReference type="HOGENOM" id="CLU_000524_4_0_9"/>
<dbReference type="OrthoDB" id="9803954at2"/>
<dbReference type="Proteomes" id="UP000000256">
    <property type="component" value="Chromosome"/>
</dbReference>
<dbReference type="GO" id="GO:0000428">
    <property type="term" value="C:DNA-directed RNA polymerase complex"/>
    <property type="evidence" value="ECO:0007669"/>
    <property type="project" value="UniProtKB-KW"/>
</dbReference>
<dbReference type="GO" id="GO:0003677">
    <property type="term" value="F:DNA binding"/>
    <property type="evidence" value="ECO:0007669"/>
    <property type="project" value="UniProtKB-UniRule"/>
</dbReference>
<dbReference type="GO" id="GO:0003899">
    <property type="term" value="F:DNA-directed RNA polymerase activity"/>
    <property type="evidence" value="ECO:0007669"/>
    <property type="project" value="UniProtKB-UniRule"/>
</dbReference>
<dbReference type="GO" id="GO:0032549">
    <property type="term" value="F:ribonucleoside binding"/>
    <property type="evidence" value="ECO:0007669"/>
    <property type="project" value="InterPro"/>
</dbReference>
<dbReference type="GO" id="GO:0006351">
    <property type="term" value="P:DNA-templated transcription"/>
    <property type="evidence" value="ECO:0007669"/>
    <property type="project" value="UniProtKB-UniRule"/>
</dbReference>
<dbReference type="CDD" id="cd00653">
    <property type="entry name" value="RNA_pol_B_RPB2"/>
    <property type="match status" value="1"/>
</dbReference>
<dbReference type="FunFam" id="3.90.1800.10:FF:000001">
    <property type="entry name" value="DNA-directed RNA polymerase subunit beta"/>
    <property type="match status" value="1"/>
</dbReference>
<dbReference type="Gene3D" id="2.40.50.100">
    <property type="match status" value="1"/>
</dbReference>
<dbReference type="Gene3D" id="2.40.50.150">
    <property type="match status" value="1"/>
</dbReference>
<dbReference type="Gene3D" id="3.90.1100.10">
    <property type="match status" value="1"/>
</dbReference>
<dbReference type="Gene3D" id="2.30.150.10">
    <property type="entry name" value="DNA-directed RNA polymerase, beta subunit, external 1 domain"/>
    <property type="match status" value="1"/>
</dbReference>
<dbReference type="Gene3D" id="2.40.270.10">
    <property type="entry name" value="DNA-directed RNA polymerase, subunit 2, domain 6"/>
    <property type="match status" value="1"/>
</dbReference>
<dbReference type="Gene3D" id="3.90.1800.10">
    <property type="entry name" value="RNA polymerase alpha subunit dimerisation domain"/>
    <property type="match status" value="1"/>
</dbReference>
<dbReference type="Gene3D" id="3.90.1110.10">
    <property type="entry name" value="RNA polymerase Rpb2, domain 2"/>
    <property type="match status" value="1"/>
</dbReference>
<dbReference type="HAMAP" id="MF_01321">
    <property type="entry name" value="RNApol_bact_RpoB"/>
    <property type="match status" value="1"/>
</dbReference>
<dbReference type="InterPro" id="IPR042107">
    <property type="entry name" value="DNA-dir_RNA_pol_bsu_ext_1_sf"/>
</dbReference>
<dbReference type="InterPro" id="IPR019462">
    <property type="entry name" value="DNA-dir_RNA_pol_bsu_external_1"/>
</dbReference>
<dbReference type="InterPro" id="IPR015712">
    <property type="entry name" value="DNA-dir_RNA_pol_su2"/>
</dbReference>
<dbReference type="InterPro" id="IPR007120">
    <property type="entry name" value="DNA-dir_RNAP_su2_dom"/>
</dbReference>
<dbReference type="InterPro" id="IPR037033">
    <property type="entry name" value="DNA-dir_RNAP_su2_hyb_sf"/>
</dbReference>
<dbReference type="InterPro" id="IPR010243">
    <property type="entry name" value="RNA_pol_bsu_bac"/>
</dbReference>
<dbReference type="InterPro" id="IPR007121">
    <property type="entry name" value="RNA_pol_bsu_CS"/>
</dbReference>
<dbReference type="InterPro" id="IPR007644">
    <property type="entry name" value="RNA_pol_bsu_protrusion"/>
</dbReference>
<dbReference type="InterPro" id="IPR007642">
    <property type="entry name" value="RNA_pol_Rpb2_2"/>
</dbReference>
<dbReference type="InterPro" id="IPR037034">
    <property type="entry name" value="RNA_pol_Rpb2_2_sf"/>
</dbReference>
<dbReference type="InterPro" id="IPR007645">
    <property type="entry name" value="RNA_pol_Rpb2_3"/>
</dbReference>
<dbReference type="InterPro" id="IPR007641">
    <property type="entry name" value="RNA_pol_Rpb2_7"/>
</dbReference>
<dbReference type="InterPro" id="IPR014724">
    <property type="entry name" value="RNA_pol_RPB2_OB-fold"/>
</dbReference>
<dbReference type="NCBIfam" id="NF001616">
    <property type="entry name" value="PRK00405.1"/>
    <property type="match status" value="1"/>
</dbReference>
<dbReference type="NCBIfam" id="TIGR02013">
    <property type="entry name" value="rpoB"/>
    <property type="match status" value="1"/>
</dbReference>
<dbReference type="PANTHER" id="PTHR20856">
    <property type="entry name" value="DNA-DIRECTED RNA POLYMERASE I SUBUNIT 2"/>
    <property type="match status" value="1"/>
</dbReference>
<dbReference type="Pfam" id="PF04563">
    <property type="entry name" value="RNA_pol_Rpb2_1"/>
    <property type="match status" value="1"/>
</dbReference>
<dbReference type="Pfam" id="PF04561">
    <property type="entry name" value="RNA_pol_Rpb2_2"/>
    <property type="match status" value="2"/>
</dbReference>
<dbReference type="Pfam" id="PF04565">
    <property type="entry name" value="RNA_pol_Rpb2_3"/>
    <property type="match status" value="1"/>
</dbReference>
<dbReference type="Pfam" id="PF10385">
    <property type="entry name" value="RNA_pol_Rpb2_45"/>
    <property type="match status" value="1"/>
</dbReference>
<dbReference type="Pfam" id="PF00562">
    <property type="entry name" value="RNA_pol_Rpb2_6"/>
    <property type="match status" value="1"/>
</dbReference>
<dbReference type="Pfam" id="PF04560">
    <property type="entry name" value="RNA_pol_Rpb2_7"/>
    <property type="match status" value="1"/>
</dbReference>
<dbReference type="SUPFAM" id="SSF64484">
    <property type="entry name" value="beta and beta-prime subunits of DNA dependent RNA-polymerase"/>
    <property type="match status" value="1"/>
</dbReference>
<dbReference type="PROSITE" id="PS01166">
    <property type="entry name" value="RNA_POL_BETA"/>
    <property type="match status" value="1"/>
</dbReference>